<gene>
    <name evidence="1" type="primary">rpsR</name>
    <name type="ordered locus">SeSA_A4661</name>
</gene>
<feature type="chain" id="PRO_1000114450" description="Small ribosomal subunit protein bS18">
    <location>
        <begin position="1"/>
        <end position="75"/>
    </location>
</feature>
<evidence type="ECO:0000255" key="1">
    <source>
        <dbReference type="HAMAP-Rule" id="MF_00270"/>
    </source>
</evidence>
<evidence type="ECO:0000305" key="2"/>
<accession>B4TT35</accession>
<sequence>MARYFRRRKFCRFTAEGVQEIDYKDIATLKNYITESGKIVPSRITGTRAKYQRQLARAIKRARYLSLLPYTDRHQ</sequence>
<comment type="function">
    <text evidence="1">Binds as a heterodimer with protein bS6 to the central domain of the 16S rRNA, where it helps stabilize the platform of the 30S subunit.</text>
</comment>
<comment type="subunit">
    <text evidence="1">Part of the 30S ribosomal subunit. Forms a tight heterodimer with protein bS6.</text>
</comment>
<comment type="similarity">
    <text evidence="1">Belongs to the bacterial ribosomal protein bS18 family.</text>
</comment>
<dbReference type="EMBL" id="CP001127">
    <property type="protein sequence ID" value="ACF89006.1"/>
    <property type="molecule type" value="Genomic_DNA"/>
</dbReference>
<dbReference type="RefSeq" id="WP_000135199.1">
    <property type="nucleotide sequence ID" value="NC_011094.1"/>
</dbReference>
<dbReference type="SMR" id="B4TT35"/>
<dbReference type="GeneID" id="98186237"/>
<dbReference type="KEGG" id="sew:SeSA_A4661"/>
<dbReference type="HOGENOM" id="CLU_148710_2_3_6"/>
<dbReference type="Proteomes" id="UP000001865">
    <property type="component" value="Chromosome"/>
</dbReference>
<dbReference type="GO" id="GO:0022627">
    <property type="term" value="C:cytosolic small ribosomal subunit"/>
    <property type="evidence" value="ECO:0007669"/>
    <property type="project" value="TreeGrafter"/>
</dbReference>
<dbReference type="GO" id="GO:0070181">
    <property type="term" value="F:small ribosomal subunit rRNA binding"/>
    <property type="evidence" value="ECO:0007669"/>
    <property type="project" value="TreeGrafter"/>
</dbReference>
<dbReference type="GO" id="GO:0003735">
    <property type="term" value="F:structural constituent of ribosome"/>
    <property type="evidence" value="ECO:0007669"/>
    <property type="project" value="InterPro"/>
</dbReference>
<dbReference type="GO" id="GO:0006412">
    <property type="term" value="P:translation"/>
    <property type="evidence" value="ECO:0007669"/>
    <property type="project" value="UniProtKB-UniRule"/>
</dbReference>
<dbReference type="FunFam" id="4.10.640.10:FF:000001">
    <property type="entry name" value="30S ribosomal protein S18"/>
    <property type="match status" value="1"/>
</dbReference>
<dbReference type="Gene3D" id="4.10.640.10">
    <property type="entry name" value="Ribosomal protein S18"/>
    <property type="match status" value="1"/>
</dbReference>
<dbReference type="HAMAP" id="MF_00270">
    <property type="entry name" value="Ribosomal_bS18"/>
    <property type="match status" value="1"/>
</dbReference>
<dbReference type="InterPro" id="IPR001648">
    <property type="entry name" value="Ribosomal_bS18"/>
</dbReference>
<dbReference type="InterPro" id="IPR018275">
    <property type="entry name" value="Ribosomal_bS18_CS"/>
</dbReference>
<dbReference type="InterPro" id="IPR036870">
    <property type="entry name" value="Ribosomal_bS18_sf"/>
</dbReference>
<dbReference type="NCBIfam" id="TIGR00165">
    <property type="entry name" value="S18"/>
    <property type="match status" value="1"/>
</dbReference>
<dbReference type="PANTHER" id="PTHR13479">
    <property type="entry name" value="30S RIBOSOMAL PROTEIN S18"/>
    <property type="match status" value="1"/>
</dbReference>
<dbReference type="PANTHER" id="PTHR13479:SF40">
    <property type="entry name" value="SMALL RIBOSOMAL SUBUNIT PROTEIN BS18M"/>
    <property type="match status" value="1"/>
</dbReference>
<dbReference type="Pfam" id="PF01084">
    <property type="entry name" value="Ribosomal_S18"/>
    <property type="match status" value="1"/>
</dbReference>
<dbReference type="PRINTS" id="PR00974">
    <property type="entry name" value="RIBOSOMALS18"/>
</dbReference>
<dbReference type="SUPFAM" id="SSF46911">
    <property type="entry name" value="Ribosomal protein S18"/>
    <property type="match status" value="1"/>
</dbReference>
<dbReference type="PROSITE" id="PS00057">
    <property type="entry name" value="RIBOSOMAL_S18"/>
    <property type="match status" value="1"/>
</dbReference>
<name>RS18_SALSV</name>
<proteinExistence type="inferred from homology"/>
<reference key="1">
    <citation type="journal article" date="2011" name="J. Bacteriol.">
        <title>Comparative genomics of 28 Salmonella enterica isolates: evidence for CRISPR-mediated adaptive sublineage evolution.</title>
        <authorList>
            <person name="Fricke W.F."/>
            <person name="Mammel M.K."/>
            <person name="McDermott P.F."/>
            <person name="Tartera C."/>
            <person name="White D.G."/>
            <person name="Leclerc J.E."/>
            <person name="Ravel J."/>
            <person name="Cebula T.A."/>
        </authorList>
    </citation>
    <scope>NUCLEOTIDE SEQUENCE [LARGE SCALE GENOMIC DNA]</scope>
    <source>
        <strain>CVM19633</strain>
    </source>
</reference>
<keyword id="KW-0687">Ribonucleoprotein</keyword>
<keyword id="KW-0689">Ribosomal protein</keyword>
<keyword id="KW-0694">RNA-binding</keyword>
<keyword id="KW-0699">rRNA-binding</keyword>
<organism>
    <name type="scientific">Salmonella schwarzengrund (strain CVM19633)</name>
    <dbReference type="NCBI Taxonomy" id="439843"/>
    <lineage>
        <taxon>Bacteria</taxon>
        <taxon>Pseudomonadati</taxon>
        <taxon>Pseudomonadota</taxon>
        <taxon>Gammaproteobacteria</taxon>
        <taxon>Enterobacterales</taxon>
        <taxon>Enterobacteriaceae</taxon>
        <taxon>Salmonella</taxon>
    </lineage>
</organism>
<protein>
    <recommendedName>
        <fullName evidence="1">Small ribosomal subunit protein bS18</fullName>
    </recommendedName>
    <alternativeName>
        <fullName evidence="2">30S ribosomal protein S18</fullName>
    </alternativeName>
</protein>